<organism>
    <name type="scientific">Thermococcus kodakarensis (strain ATCC BAA-918 / JCM 12380 / KOD1)</name>
    <name type="common">Pyrococcus kodakaraensis (strain KOD1)</name>
    <dbReference type="NCBI Taxonomy" id="69014"/>
    <lineage>
        <taxon>Archaea</taxon>
        <taxon>Methanobacteriati</taxon>
        <taxon>Methanobacteriota</taxon>
        <taxon>Thermococci</taxon>
        <taxon>Thermococcales</taxon>
        <taxon>Thermococcaceae</taxon>
        <taxon>Thermococcus</taxon>
    </lineage>
</organism>
<protein>
    <recommendedName>
        <fullName evidence="1">Type 2 DNA topoisomerase 6 subunit B</fullName>
        <ecNumber evidence="1">5.6.2.2</ecNumber>
    </recommendedName>
    <alternativeName>
        <fullName evidence="1">Type II DNA topoisomerase VI subunit B</fullName>
        <shortName evidence="1">TopoVI-B</shortName>
    </alternativeName>
</protein>
<sequence length="567" mass="64233">MAEANQLFKEFKIQSVSEFFRRNAAMLGYTGKVRSLTTLVHEAVTNSLDACEEAGIPPYVRVEIEELGNEHYKVVVEDNGPGIPEKYITHVFGKMLAGTKAHRNIQSRGQQGIGISGAVMFAQITSGKATRVITSTGNDEIIEAWVKIDVDKNEGKIVKKEKHPNPKGWRGTRIELEVKNVKYMRSKQGVFWYLKLTAIANPHAHIELIEPDGKLIVFPRSSDYIPEPPVEMKPHPKGVLTDDVYRLAKKTRRNTVRRFLIGEFSRISDKKVDELIEYIAALRLIKTVEDKKLQEQYYQKLMEGHVKAVLRAFKGYTKVVKQVAKMMEKPPEKLTWHEAEEIVEAFKYMKFLAPPTHGLRPIGEENIEKGLKGILKPEFVTAVTRPPKVYSGGIPFQVEVGIAYGGEIPAGFDLYRYANRVPLLFDAGSCVTTQAARSIDWKRYKIDDLDRAPLVLMINVVSVHVPYTGTGKQSIASVDEIYNEIRLAIMDAARRLQTYLSGKHRKLAQVKRRKTFEKYVPEIARALSILTGEPEEKIREYFIRFIESKFASAEVEEVAAEEVAENA</sequence>
<comment type="function">
    <text evidence="1">Relaxes both positive and negative superturns and exhibits a strong decatenase activity.</text>
</comment>
<comment type="catalytic activity">
    <reaction evidence="1">
        <text>ATP-dependent breakage, passage and rejoining of double-stranded DNA.</text>
        <dbReference type="EC" id="5.6.2.2"/>
    </reaction>
</comment>
<comment type="subunit">
    <text evidence="1">Homodimer. Heterotetramer of two Top6A and two Top6B chains.</text>
</comment>
<comment type="similarity">
    <text evidence="1">Belongs to the TOP6B family.</text>
</comment>
<name>TOP6B_THEKO</name>
<accession>Q5JH81</accession>
<proteinExistence type="inferred from homology"/>
<dbReference type="EC" id="5.6.2.2" evidence="1"/>
<dbReference type="EMBL" id="AP006878">
    <property type="protein sequence ID" value="BAD84988.1"/>
    <property type="molecule type" value="Genomic_DNA"/>
</dbReference>
<dbReference type="RefSeq" id="WP_011249750.1">
    <property type="nucleotide sequence ID" value="NC_006624.1"/>
</dbReference>
<dbReference type="SMR" id="Q5JH81"/>
<dbReference type="FunCoup" id="Q5JH81">
    <property type="interactions" value="18"/>
</dbReference>
<dbReference type="IntAct" id="Q5JH81">
    <property type="interactions" value="1"/>
</dbReference>
<dbReference type="MINT" id="Q5JH81"/>
<dbReference type="STRING" id="69014.TK0799"/>
<dbReference type="EnsemblBacteria" id="BAD84988">
    <property type="protein sequence ID" value="BAD84988"/>
    <property type="gene ID" value="TK0799"/>
</dbReference>
<dbReference type="GeneID" id="78447315"/>
<dbReference type="KEGG" id="tko:TK0799"/>
<dbReference type="PATRIC" id="fig|69014.16.peg.779"/>
<dbReference type="eggNOG" id="arCOG01165">
    <property type="taxonomic scope" value="Archaea"/>
</dbReference>
<dbReference type="HOGENOM" id="CLU_006403_0_0_2"/>
<dbReference type="InParanoid" id="Q5JH81"/>
<dbReference type="OrthoDB" id="65493at2157"/>
<dbReference type="PhylomeDB" id="Q5JH81"/>
<dbReference type="Proteomes" id="UP000000536">
    <property type="component" value="Chromosome"/>
</dbReference>
<dbReference type="GO" id="GO:0005829">
    <property type="term" value="C:cytosol"/>
    <property type="evidence" value="ECO:0000318"/>
    <property type="project" value="GO_Central"/>
</dbReference>
<dbReference type="GO" id="GO:0015935">
    <property type="term" value="C:small ribosomal subunit"/>
    <property type="evidence" value="ECO:0000318"/>
    <property type="project" value="GO_Central"/>
</dbReference>
<dbReference type="GO" id="GO:0005524">
    <property type="term" value="F:ATP binding"/>
    <property type="evidence" value="ECO:0007669"/>
    <property type="project" value="UniProtKB-UniRule"/>
</dbReference>
<dbReference type="GO" id="GO:0003677">
    <property type="term" value="F:DNA binding"/>
    <property type="evidence" value="ECO:0007669"/>
    <property type="project" value="UniProtKB-UniRule"/>
</dbReference>
<dbReference type="GO" id="GO:0003918">
    <property type="term" value="F:DNA topoisomerase type II (double strand cut, ATP-hydrolyzing) activity"/>
    <property type="evidence" value="ECO:0007669"/>
    <property type="project" value="UniProtKB-UniRule"/>
</dbReference>
<dbReference type="GO" id="GO:0006265">
    <property type="term" value="P:DNA topological change"/>
    <property type="evidence" value="ECO:0007669"/>
    <property type="project" value="UniProtKB-UniRule"/>
</dbReference>
<dbReference type="CDD" id="cd00823">
    <property type="entry name" value="TopoIIB_Trans"/>
    <property type="match status" value="1"/>
</dbReference>
<dbReference type="FunFam" id="1.10.8.50:FF:000028">
    <property type="entry name" value="Type 2 DNA topoisomerase 6 subunit B"/>
    <property type="match status" value="1"/>
</dbReference>
<dbReference type="FunFam" id="3.30.230.10:FF:000202">
    <property type="entry name" value="Type 2 DNA topoisomerase 6 subunit B"/>
    <property type="match status" value="1"/>
</dbReference>
<dbReference type="FunFam" id="3.30.565.10:FF:000062">
    <property type="entry name" value="Type 2 DNA topoisomerase 6 subunit B"/>
    <property type="match status" value="1"/>
</dbReference>
<dbReference type="Gene3D" id="1.10.8.50">
    <property type="match status" value="1"/>
</dbReference>
<dbReference type="Gene3D" id="3.30.230.10">
    <property type="match status" value="1"/>
</dbReference>
<dbReference type="Gene3D" id="3.30.565.10">
    <property type="entry name" value="Histidine kinase-like ATPase, C-terminal domain"/>
    <property type="match status" value="1"/>
</dbReference>
<dbReference type="HAMAP" id="MF_00322">
    <property type="entry name" value="Top6B"/>
    <property type="match status" value="1"/>
</dbReference>
<dbReference type="InterPro" id="IPR036890">
    <property type="entry name" value="HATPase_C_sf"/>
</dbReference>
<dbReference type="InterPro" id="IPR020568">
    <property type="entry name" value="Ribosomal_Su5_D2-typ_SF"/>
</dbReference>
<dbReference type="InterPro" id="IPR014721">
    <property type="entry name" value="Ribsml_uS5_D2-typ_fold_subgr"/>
</dbReference>
<dbReference type="InterPro" id="IPR005734">
    <property type="entry name" value="TopoVI_B"/>
</dbReference>
<dbReference type="InterPro" id="IPR015320">
    <property type="entry name" value="TopoVI_B_transducer"/>
</dbReference>
<dbReference type="NCBIfam" id="NF003218">
    <property type="entry name" value="PRK04184.1"/>
    <property type="match status" value="1"/>
</dbReference>
<dbReference type="NCBIfam" id="TIGR01052">
    <property type="entry name" value="top6b"/>
    <property type="match status" value="1"/>
</dbReference>
<dbReference type="PANTHER" id="PTHR48444">
    <property type="entry name" value="DNA TOPOISOMERASE 6 SUBUNIT B"/>
    <property type="match status" value="1"/>
</dbReference>
<dbReference type="PANTHER" id="PTHR48444:SF1">
    <property type="entry name" value="DNA TOPOISOMERASE 6 SUBUNIT B"/>
    <property type="match status" value="1"/>
</dbReference>
<dbReference type="Pfam" id="PF02518">
    <property type="entry name" value="HATPase_c"/>
    <property type="match status" value="1"/>
</dbReference>
<dbReference type="Pfam" id="PF09239">
    <property type="entry name" value="Topo-VIb_trans"/>
    <property type="match status" value="1"/>
</dbReference>
<dbReference type="PIRSF" id="PIRSF006553">
    <property type="entry name" value="TopoVI_B"/>
    <property type="match status" value="1"/>
</dbReference>
<dbReference type="SMART" id="SM00387">
    <property type="entry name" value="HATPase_c"/>
    <property type="match status" value="1"/>
</dbReference>
<dbReference type="SUPFAM" id="SSF55874">
    <property type="entry name" value="ATPase domain of HSP90 chaperone/DNA topoisomerase II/histidine kinase"/>
    <property type="match status" value="1"/>
</dbReference>
<dbReference type="SUPFAM" id="SSF54211">
    <property type="entry name" value="Ribosomal protein S5 domain 2-like"/>
    <property type="match status" value="1"/>
</dbReference>
<evidence type="ECO:0000255" key="1">
    <source>
        <dbReference type="HAMAP-Rule" id="MF_00322"/>
    </source>
</evidence>
<feature type="chain" id="PRO_0000145469" description="Type 2 DNA topoisomerase 6 subunit B">
    <location>
        <begin position="1"/>
        <end position="567"/>
    </location>
</feature>
<feature type="binding site" evidence="1">
    <location>
        <position position="46"/>
    </location>
    <ligand>
        <name>ATP</name>
        <dbReference type="ChEBI" id="CHEBI:30616"/>
    </ligand>
</feature>
<feature type="binding site" evidence="1">
    <location>
        <position position="78"/>
    </location>
    <ligand>
        <name>ATP</name>
        <dbReference type="ChEBI" id="CHEBI:30616"/>
    </ligand>
</feature>
<feature type="binding site" evidence="1">
    <location>
        <begin position="99"/>
        <end position="100"/>
    </location>
    <ligand>
        <name>ATP</name>
        <dbReference type="ChEBI" id="CHEBI:30616"/>
    </ligand>
</feature>
<feature type="binding site" evidence="1">
    <location>
        <begin position="109"/>
        <end position="116"/>
    </location>
    <ligand>
        <name>ATP</name>
        <dbReference type="ChEBI" id="CHEBI:30616"/>
    </ligand>
</feature>
<feature type="binding site" evidence="1">
    <location>
        <position position="472"/>
    </location>
    <ligand>
        <name>ATP</name>
        <dbReference type="ChEBI" id="CHEBI:30616"/>
    </ligand>
</feature>
<gene>
    <name evidence="1" type="primary">top6B</name>
    <name type="ordered locus">TK0799</name>
</gene>
<keyword id="KW-0067">ATP-binding</keyword>
<keyword id="KW-0238">DNA-binding</keyword>
<keyword id="KW-0413">Isomerase</keyword>
<keyword id="KW-0547">Nucleotide-binding</keyword>
<keyword id="KW-1185">Reference proteome</keyword>
<keyword id="KW-0799">Topoisomerase</keyword>
<reference key="1">
    <citation type="journal article" date="2005" name="Genome Res.">
        <title>Complete genome sequence of the hyperthermophilic archaeon Thermococcus kodakaraensis KOD1 and comparison with Pyrococcus genomes.</title>
        <authorList>
            <person name="Fukui T."/>
            <person name="Atomi H."/>
            <person name="Kanai T."/>
            <person name="Matsumi R."/>
            <person name="Fujiwara S."/>
            <person name="Imanaka T."/>
        </authorList>
    </citation>
    <scope>NUCLEOTIDE SEQUENCE [LARGE SCALE GENOMIC DNA]</scope>
    <source>
        <strain>ATCC BAA-918 / JCM 12380 / KOD1</strain>
    </source>
</reference>